<reference key="1">
    <citation type="submission" date="2006-12" db="EMBL/GenBank/DDBJ databases">
        <authorList>
            <person name="Hendrix L."/>
            <person name="Mohamoud Y."/>
            <person name="Radune D."/>
            <person name="Shvartsbeyn A."/>
            <person name="Daugherty S."/>
            <person name="Dodson R."/>
            <person name="Durkin A.S."/>
            <person name="Harkins D."/>
            <person name="Huot H."/>
            <person name="Kothari S.P."/>
            <person name="Madupu R."/>
            <person name="Li J."/>
            <person name="Nelson W.C."/>
            <person name="Shrivastava S."/>
            <person name="Giglio M.G."/>
            <person name="Haft D."/>
            <person name="Selengut J."/>
            <person name="Fraser-Ligget C."/>
            <person name="Seshadri R."/>
        </authorList>
    </citation>
    <scope>NUCLEOTIDE SEQUENCE [LARGE SCALE GENOMIC DNA]</scope>
    <source>
        <strain>ATCC 35685 / KC583 / Herrer 020/F12,63</strain>
    </source>
</reference>
<feature type="chain" id="PRO_1000020343" description="Threonine--tRNA ligase">
    <location>
        <begin position="1"/>
        <end position="658"/>
    </location>
</feature>
<feature type="domain" description="TGS" evidence="2">
    <location>
        <begin position="1"/>
        <end position="64"/>
    </location>
</feature>
<feature type="region of interest" description="Catalytic" evidence="1">
    <location>
        <begin position="246"/>
        <end position="549"/>
    </location>
</feature>
<feature type="binding site" evidence="1">
    <location>
        <position position="343"/>
    </location>
    <ligand>
        <name>Zn(2+)</name>
        <dbReference type="ChEBI" id="CHEBI:29105"/>
    </ligand>
</feature>
<feature type="binding site" evidence="1">
    <location>
        <position position="394"/>
    </location>
    <ligand>
        <name>Zn(2+)</name>
        <dbReference type="ChEBI" id="CHEBI:29105"/>
    </ligand>
</feature>
<feature type="binding site" evidence="1">
    <location>
        <position position="526"/>
    </location>
    <ligand>
        <name>Zn(2+)</name>
        <dbReference type="ChEBI" id="CHEBI:29105"/>
    </ligand>
</feature>
<keyword id="KW-0030">Aminoacyl-tRNA synthetase</keyword>
<keyword id="KW-0067">ATP-binding</keyword>
<keyword id="KW-0963">Cytoplasm</keyword>
<keyword id="KW-0436">Ligase</keyword>
<keyword id="KW-0479">Metal-binding</keyword>
<keyword id="KW-0547">Nucleotide-binding</keyword>
<keyword id="KW-0648">Protein biosynthesis</keyword>
<keyword id="KW-0694">RNA-binding</keyword>
<keyword id="KW-0820">tRNA-binding</keyword>
<keyword id="KW-0862">Zinc</keyword>
<accession>A1USJ2</accession>
<evidence type="ECO:0000255" key="1">
    <source>
        <dbReference type="HAMAP-Rule" id="MF_00184"/>
    </source>
</evidence>
<evidence type="ECO:0000255" key="2">
    <source>
        <dbReference type="PROSITE-ProRule" id="PRU01228"/>
    </source>
</evidence>
<comment type="function">
    <text evidence="1">Catalyzes the attachment of threonine to tRNA(Thr) in a two-step reaction: L-threonine is first activated by ATP to form Thr-AMP and then transferred to the acceptor end of tRNA(Thr). Also edits incorrectly charged L-seryl-tRNA(Thr).</text>
</comment>
<comment type="catalytic activity">
    <reaction evidence="1">
        <text>tRNA(Thr) + L-threonine + ATP = L-threonyl-tRNA(Thr) + AMP + diphosphate + H(+)</text>
        <dbReference type="Rhea" id="RHEA:24624"/>
        <dbReference type="Rhea" id="RHEA-COMP:9670"/>
        <dbReference type="Rhea" id="RHEA-COMP:9704"/>
        <dbReference type="ChEBI" id="CHEBI:15378"/>
        <dbReference type="ChEBI" id="CHEBI:30616"/>
        <dbReference type="ChEBI" id="CHEBI:33019"/>
        <dbReference type="ChEBI" id="CHEBI:57926"/>
        <dbReference type="ChEBI" id="CHEBI:78442"/>
        <dbReference type="ChEBI" id="CHEBI:78534"/>
        <dbReference type="ChEBI" id="CHEBI:456215"/>
        <dbReference type="EC" id="6.1.1.3"/>
    </reaction>
</comment>
<comment type="cofactor">
    <cofactor evidence="1">
        <name>Zn(2+)</name>
        <dbReference type="ChEBI" id="CHEBI:29105"/>
    </cofactor>
    <text evidence="1">Binds 1 zinc ion per subunit.</text>
</comment>
<comment type="subunit">
    <text evidence="1">Homodimer.</text>
</comment>
<comment type="subcellular location">
    <subcellularLocation>
        <location evidence="1">Cytoplasm</location>
    </subcellularLocation>
</comment>
<comment type="similarity">
    <text evidence="1">Belongs to the class-II aminoacyl-tRNA synthetase family.</text>
</comment>
<protein>
    <recommendedName>
        <fullName evidence="1">Threonine--tRNA ligase</fullName>
        <ecNumber evidence="1">6.1.1.3</ecNumber>
    </recommendedName>
    <alternativeName>
        <fullName evidence="1">Threonyl-tRNA synthetase</fullName>
        <shortName evidence="1">ThrRS</shortName>
    </alternativeName>
</protein>
<sequence>MSFSISLSFPDGSQRDFPAEITGLELAESISKSLAKKAIAYSLNGVIRDLLDPLEQSGQVEIITRDDPRALQLIRHSCAHVLAEAVQELFPETQVTIGPVIENGFYYDFARQQPFTLEDLNTIEKKMREIIQRNKFFKKEIWSREKAKKIFSDKGELYKVELIDAIPEDQDLKIYYQGDWFDLCRGPHVPSTGQIGNAFKLMKVAGAYWRGDANNPMLTRIYGTAFSNENALKAYLNMLEEAEKRDHRRLGREMDLFHFQEEGPGMIFWHPKGWKMFQNLVSYMRRRLDEHKYDEVNAPQVLDKSLWETSGHWGWYQENMFKTIPATNDWNDEHVYALKPMNCPGHVQIFKHGLKSYRDLPIRLAEFGLLHRYEPSGSLHGLMRVRSFTQDDAHVFCTDEQLADECLKINDLILSTYADFGFEEIILKLSTRPEKRVGSDELWDHAENIMMSVLKTIEKEAKGRIKTSILQGEGAFYGPKFEYTLKDAIGREWQCGTTQVDFNLPERFEVFYINRDSEKCQPVMIHRAIFGSMERFLGILIENFAGHMPLWLAPQQIVVTTITSEANEYAEKITAKLKASGLSAVSDLRSEKINYKIREHSLQKVPVILVCGKRESETNSVNMRRLGSMNQISLPIDQAIKQLTNEAIPPDLRRFMNS</sequence>
<gene>
    <name evidence="1" type="primary">thrS</name>
    <name type="ordered locus">BARBAKC583_0641</name>
</gene>
<name>SYT_BARBK</name>
<proteinExistence type="inferred from homology"/>
<dbReference type="EC" id="6.1.1.3" evidence="1"/>
<dbReference type="EMBL" id="CP000524">
    <property type="protein sequence ID" value="ABM44590.1"/>
    <property type="molecule type" value="Genomic_DNA"/>
</dbReference>
<dbReference type="RefSeq" id="WP_005766855.1">
    <property type="nucleotide sequence ID" value="NC_008783.1"/>
</dbReference>
<dbReference type="SMR" id="A1USJ2"/>
<dbReference type="STRING" id="360095.BARBAKC583_0641"/>
<dbReference type="GeneID" id="4684002"/>
<dbReference type="KEGG" id="bbk:BARBAKC583_0641"/>
<dbReference type="PATRIC" id="fig|360095.6.peg.625"/>
<dbReference type="eggNOG" id="COG0441">
    <property type="taxonomic scope" value="Bacteria"/>
</dbReference>
<dbReference type="HOGENOM" id="CLU_008554_0_1_5"/>
<dbReference type="OrthoDB" id="9802304at2"/>
<dbReference type="Proteomes" id="UP000000643">
    <property type="component" value="Chromosome"/>
</dbReference>
<dbReference type="GO" id="GO:0005829">
    <property type="term" value="C:cytosol"/>
    <property type="evidence" value="ECO:0007669"/>
    <property type="project" value="TreeGrafter"/>
</dbReference>
<dbReference type="GO" id="GO:0005524">
    <property type="term" value="F:ATP binding"/>
    <property type="evidence" value="ECO:0007669"/>
    <property type="project" value="UniProtKB-UniRule"/>
</dbReference>
<dbReference type="GO" id="GO:0046872">
    <property type="term" value="F:metal ion binding"/>
    <property type="evidence" value="ECO:0007669"/>
    <property type="project" value="UniProtKB-KW"/>
</dbReference>
<dbReference type="GO" id="GO:0004829">
    <property type="term" value="F:threonine-tRNA ligase activity"/>
    <property type="evidence" value="ECO:0007669"/>
    <property type="project" value="UniProtKB-UniRule"/>
</dbReference>
<dbReference type="GO" id="GO:0000049">
    <property type="term" value="F:tRNA binding"/>
    <property type="evidence" value="ECO:0007669"/>
    <property type="project" value="UniProtKB-KW"/>
</dbReference>
<dbReference type="GO" id="GO:0006435">
    <property type="term" value="P:threonyl-tRNA aminoacylation"/>
    <property type="evidence" value="ECO:0007669"/>
    <property type="project" value="UniProtKB-UniRule"/>
</dbReference>
<dbReference type="CDD" id="cd01667">
    <property type="entry name" value="TGS_ThrRS"/>
    <property type="match status" value="1"/>
</dbReference>
<dbReference type="CDD" id="cd00860">
    <property type="entry name" value="ThrRS_anticodon"/>
    <property type="match status" value="1"/>
</dbReference>
<dbReference type="CDD" id="cd00771">
    <property type="entry name" value="ThrRS_core"/>
    <property type="match status" value="1"/>
</dbReference>
<dbReference type="FunFam" id="3.30.54.20:FF:000002">
    <property type="entry name" value="Threonine--tRNA ligase"/>
    <property type="match status" value="1"/>
</dbReference>
<dbReference type="FunFam" id="3.30.930.10:FF:000002">
    <property type="entry name" value="Threonine--tRNA ligase"/>
    <property type="match status" value="1"/>
</dbReference>
<dbReference type="FunFam" id="3.40.50.800:FF:000001">
    <property type="entry name" value="Threonine--tRNA ligase"/>
    <property type="match status" value="1"/>
</dbReference>
<dbReference type="FunFam" id="3.30.980.10:FF:000005">
    <property type="entry name" value="Threonyl-tRNA synthetase, mitochondrial"/>
    <property type="match status" value="1"/>
</dbReference>
<dbReference type="Gene3D" id="3.10.20.30">
    <property type="match status" value="1"/>
</dbReference>
<dbReference type="Gene3D" id="3.30.54.20">
    <property type="match status" value="1"/>
</dbReference>
<dbReference type="Gene3D" id="3.40.50.800">
    <property type="entry name" value="Anticodon-binding domain"/>
    <property type="match status" value="1"/>
</dbReference>
<dbReference type="Gene3D" id="3.30.930.10">
    <property type="entry name" value="Bira Bifunctional Protein, Domain 2"/>
    <property type="match status" value="1"/>
</dbReference>
<dbReference type="Gene3D" id="3.30.980.10">
    <property type="entry name" value="Threonyl-trna Synthetase, Chain A, domain 2"/>
    <property type="match status" value="1"/>
</dbReference>
<dbReference type="HAMAP" id="MF_00184">
    <property type="entry name" value="Thr_tRNA_synth"/>
    <property type="match status" value="1"/>
</dbReference>
<dbReference type="InterPro" id="IPR002314">
    <property type="entry name" value="aa-tRNA-synt_IIb"/>
</dbReference>
<dbReference type="InterPro" id="IPR006195">
    <property type="entry name" value="aa-tRNA-synth_II"/>
</dbReference>
<dbReference type="InterPro" id="IPR045864">
    <property type="entry name" value="aa-tRNA-synth_II/BPL/LPL"/>
</dbReference>
<dbReference type="InterPro" id="IPR004154">
    <property type="entry name" value="Anticodon-bd"/>
</dbReference>
<dbReference type="InterPro" id="IPR036621">
    <property type="entry name" value="Anticodon-bd_dom_sf"/>
</dbReference>
<dbReference type="InterPro" id="IPR012675">
    <property type="entry name" value="Beta-grasp_dom_sf"/>
</dbReference>
<dbReference type="InterPro" id="IPR004095">
    <property type="entry name" value="TGS"/>
</dbReference>
<dbReference type="InterPro" id="IPR012676">
    <property type="entry name" value="TGS-like"/>
</dbReference>
<dbReference type="InterPro" id="IPR002320">
    <property type="entry name" value="Thr-tRNA-ligase_IIa"/>
</dbReference>
<dbReference type="InterPro" id="IPR018163">
    <property type="entry name" value="Thr/Ala-tRNA-synth_IIc_edit"/>
</dbReference>
<dbReference type="InterPro" id="IPR047246">
    <property type="entry name" value="ThrRS_anticodon"/>
</dbReference>
<dbReference type="InterPro" id="IPR033728">
    <property type="entry name" value="ThrRS_core"/>
</dbReference>
<dbReference type="InterPro" id="IPR012947">
    <property type="entry name" value="tRNA_SAD"/>
</dbReference>
<dbReference type="NCBIfam" id="TIGR00418">
    <property type="entry name" value="thrS"/>
    <property type="match status" value="1"/>
</dbReference>
<dbReference type="PANTHER" id="PTHR11451:SF44">
    <property type="entry name" value="THREONINE--TRNA LIGASE, CHLOROPLASTIC_MITOCHONDRIAL 2"/>
    <property type="match status" value="1"/>
</dbReference>
<dbReference type="PANTHER" id="PTHR11451">
    <property type="entry name" value="THREONINE-TRNA LIGASE"/>
    <property type="match status" value="1"/>
</dbReference>
<dbReference type="Pfam" id="PF03129">
    <property type="entry name" value="HGTP_anticodon"/>
    <property type="match status" value="1"/>
</dbReference>
<dbReference type="Pfam" id="PF02824">
    <property type="entry name" value="TGS"/>
    <property type="match status" value="1"/>
</dbReference>
<dbReference type="Pfam" id="PF00587">
    <property type="entry name" value="tRNA-synt_2b"/>
    <property type="match status" value="1"/>
</dbReference>
<dbReference type="Pfam" id="PF07973">
    <property type="entry name" value="tRNA_SAD"/>
    <property type="match status" value="1"/>
</dbReference>
<dbReference type="PRINTS" id="PR01047">
    <property type="entry name" value="TRNASYNTHTHR"/>
</dbReference>
<dbReference type="SMART" id="SM00863">
    <property type="entry name" value="tRNA_SAD"/>
    <property type="match status" value="1"/>
</dbReference>
<dbReference type="SUPFAM" id="SSF52954">
    <property type="entry name" value="Class II aaRS ABD-related"/>
    <property type="match status" value="1"/>
</dbReference>
<dbReference type="SUPFAM" id="SSF55681">
    <property type="entry name" value="Class II aaRS and biotin synthetases"/>
    <property type="match status" value="1"/>
</dbReference>
<dbReference type="SUPFAM" id="SSF81271">
    <property type="entry name" value="TGS-like"/>
    <property type="match status" value="1"/>
</dbReference>
<dbReference type="SUPFAM" id="SSF55186">
    <property type="entry name" value="ThrRS/AlaRS common domain"/>
    <property type="match status" value="1"/>
</dbReference>
<dbReference type="PROSITE" id="PS50862">
    <property type="entry name" value="AA_TRNA_LIGASE_II"/>
    <property type="match status" value="1"/>
</dbReference>
<dbReference type="PROSITE" id="PS51880">
    <property type="entry name" value="TGS"/>
    <property type="match status" value="1"/>
</dbReference>
<organism>
    <name type="scientific">Bartonella bacilliformis (strain ATCC 35685 / KC583 / Herrer 020/F12,63)</name>
    <dbReference type="NCBI Taxonomy" id="360095"/>
    <lineage>
        <taxon>Bacteria</taxon>
        <taxon>Pseudomonadati</taxon>
        <taxon>Pseudomonadota</taxon>
        <taxon>Alphaproteobacteria</taxon>
        <taxon>Hyphomicrobiales</taxon>
        <taxon>Bartonellaceae</taxon>
        <taxon>Bartonella</taxon>
    </lineage>
</organism>